<evidence type="ECO:0000255" key="1">
    <source>
        <dbReference type="HAMAP-Rule" id="MF_01321"/>
    </source>
</evidence>
<geneLocation type="chloroplast"/>
<name>RPOB_PYRYE</name>
<organism>
    <name type="scientific">Pyropia yezoensis</name>
    <name type="common">Susabi-nori</name>
    <name type="synonym">Porphyra yezoensis</name>
    <dbReference type="NCBI Taxonomy" id="2788"/>
    <lineage>
        <taxon>Eukaryota</taxon>
        <taxon>Rhodophyta</taxon>
        <taxon>Bangiophyceae</taxon>
        <taxon>Bangiales</taxon>
        <taxon>Bangiaceae</taxon>
        <taxon>Pyropia</taxon>
    </lineage>
</organism>
<protein>
    <recommendedName>
        <fullName evidence="1">DNA-directed RNA polymerase subunit beta</fullName>
        <ecNumber evidence="1">2.7.7.6</ecNumber>
    </recommendedName>
    <alternativeName>
        <fullName evidence="1">PEP</fullName>
    </alternativeName>
    <alternativeName>
        <fullName evidence="1">Plastid-encoded RNA polymerase subunit beta</fullName>
        <shortName evidence="1">RNA polymerase subunit beta</shortName>
    </alternativeName>
</protein>
<feature type="chain" id="PRO_0000237328" description="DNA-directed RNA polymerase subunit beta">
    <location>
        <begin position="1"/>
        <end position="1143"/>
    </location>
</feature>
<sequence>MVQRISLKNKLLPDLVEIQRASFKWFLLEGLTEVLEIFPKISDPTSRLELQLFGNEYKIKFPRYSVRQAKNRDKTYSAQIYVPAKLTRKDIDLPSKNQEKNIKSLDLSSTHLQLSAEKQIKNKKYKKRLVFIGDLPIMTNRGTFIVSGTERVIINQIIRSPGIYYKQEIDKNGKQIYSASLISNRGSWLKFEIDPKGEIWIRIDKTHKVNAYIFLRAIGLNKDEIEKGLSKYAFLISASQIYSVKELAKEIGKNNIEEVTDEEALLIVYSKLRPNEPATVAVAKQMLYSRFFDPKRYDLGEVGRYKINKKLGLNIPKTFRVLSPQDILSSIDYLINIKDKNSGNLDDIDHLGNRRVRSVGELLQNQFRVGLNRLERIIRERMMICDIDSLSLSNLINPKPLIASVREFFGSSQLSQFMDQTNPVAELTHKRRISALGPGGFNKDRAGFAVRDLHPSHYGRICPIETPEGPNAGLIGSLATCARVNVFGFIETPFYPVNQGQVIYHNSPVYLTADEEDDFRVAPGDVKVSKQHYIEGDIIPVRYRQEFITTTPTQVDYIAISPIQVISAATSLIPFLEHDDANRALMGSNMQRQAVPLLYPEKPIIGTGLETKIARDSGMVVISRTSGHVNYVSANKIGIQDNSGRTVHYRLKKYYRSNQDTCINQRPIVWVGEKIVVGQTLADGASTDGGEIALGRNILVAYMPWEGYNYEDAFLISERLVYDDLYTSIHIEKYEVECRQTKLGPEEITREIPNVSDNSLKDLDRNGIVVGGSWVEAGDILVGKITPKGEADQLPEGKLLRAIFGEKARDVRDTSLRLPNAAKGRVVKVRVFTRQKGDELPPGTNAMIRVYVAQKRKIQVGDKMAGRHGNKGIISRILPKQDMPYLSDGTPVDIVLNPLGVPSRMNVGQVFECLLGLAGGYLGKRFKIIPFDEMYGAEASRALVNRKLKEASLITSNKWLFNDQHPGKMQVFDGRTGEPFDNPVTVGRAYMLKLVHLVDDKIHARSTGPYSLVTQQPLGGRAQHGGQRLGEMEVWALEAFGAAYTLQELLTVKSDDMQARNEALNAIVKGKPIPKPGTPESFKVLMRELQSLGLDIAVHKLKLFEDGQRRTVEVDLMSDSKDNRVDRSNYDTPPVDDFEQFLY</sequence>
<reference key="1">
    <citation type="submission" date="2003-11" db="EMBL/GenBank/DDBJ databases">
        <title>Whole genome sequence of Porphyra yezoensis chloroplast.</title>
        <authorList>
            <person name="Kunimoto M."/>
            <person name="Morishima K."/>
            <person name="Yoshikawa M."/>
            <person name="Fukuda S."/>
            <person name="Kobayashi T."/>
            <person name="Kobayashi M."/>
            <person name="Okazaki T."/>
            <person name="Ohara I."/>
            <person name="Nakayama I."/>
        </authorList>
    </citation>
    <scope>NUCLEOTIDE SEQUENCE [LARGE SCALE GENOMIC DNA]</scope>
    <source>
        <strain>U-51</strain>
    </source>
</reference>
<gene>
    <name evidence="1" type="primary">rpoB</name>
</gene>
<accession>Q1XDN5</accession>
<keyword id="KW-0150">Chloroplast</keyword>
<keyword id="KW-0240">DNA-directed RNA polymerase</keyword>
<keyword id="KW-0548">Nucleotidyltransferase</keyword>
<keyword id="KW-0934">Plastid</keyword>
<keyword id="KW-0804">Transcription</keyword>
<keyword id="KW-0808">Transferase</keyword>
<proteinExistence type="inferred from homology"/>
<dbReference type="EC" id="2.7.7.6" evidence="1"/>
<dbReference type="EMBL" id="AP006715">
    <property type="protein sequence ID" value="BAE92376.1"/>
    <property type="molecule type" value="Genomic_DNA"/>
</dbReference>
<dbReference type="RefSeq" id="YP_536933.1">
    <property type="nucleotide sequence ID" value="NC_007932.1"/>
</dbReference>
<dbReference type="SMR" id="Q1XDN5"/>
<dbReference type="GeneID" id="3978929"/>
<dbReference type="GO" id="GO:0009507">
    <property type="term" value="C:chloroplast"/>
    <property type="evidence" value="ECO:0007669"/>
    <property type="project" value="UniProtKB-SubCell"/>
</dbReference>
<dbReference type="GO" id="GO:0000428">
    <property type="term" value="C:DNA-directed RNA polymerase complex"/>
    <property type="evidence" value="ECO:0007669"/>
    <property type="project" value="UniProtKB-KW"/>
</dbReference>
<dbReference type="GO" id="GO:0005739">
    <property type="term" value="C:mitochondrion"/>
    <property type="evidence" value="ECO:0007669"/>
    <property type="project" value="GOC"/>
</dbReference>
<dbReference type="GO" id="GO:0003677">
    <property type="term" value="F:DNA binding"/>
    <property type="evidence" value="ECO:0007669"/>
    <property type="project" value="UniProtKB-UniRule"/>
</dbReference>
<dbReference type="GO" id="GO:0003899">
    <property type="term" value="F:DNA-directed RNA polymerase activity"/>
    <property type="evidence" value="ECO:0007669"/>
    <property type="project" value="UniProtKB-UniRule"/>
</dbReference>
<dbReference type="GO" id="GO:0032549">
    <property type="term" value="F:ribonucleoside binding"/>
    <property type="evidence" value="ECO:0007669"/>
    <property type="project" value="InterPro"/>
</dbReference>
<dbReference type="GO" id="GO:0006351">
    <property type="term" value="P:DNA-templated transcription"/>
    <property type="evidence" value="ECO:0007669"/>
    <property type="project" value="UniProtKB-UniRule"/>
</dbReference>
<dbReference type="CDD" id="cd00653">
    <property type="entry name" value="RNA_pol_B_RPB2"/>
    <property type="match status" value="1"/>
</dbReference>
<dbReference type="Gene3D" id="2.40.50.100">
    <property type="match status" value="1"/>
</dbReference>
<dbReference type="Gene3D" id="2.40.50.150">
    <property type="match status" value="1"/>
</dbReference>
<dbReference type="Gene3D" id="3.90.1100.10">
    <property type="match status" value="2"/>
</dbReference>
<dbReference type="Gene3D" id="2.30.150.10">
    <property type="entry name" value="DNA-directed RNA polymerase, beta subunit, external 1 domain"/>
    <property type="match status" value="1"/>
</dbReference>
<dbReference type="Gene3D" id="2.40.270.10">
    <property type="entry name" value="DNA-directed RNA polymerase, subunit 2, domain 6"/>
    <property type="match status" value="1"/>
</dbReference>
<dbReference type="Gene3D" id="3.90.1800.10">
    <property type="entry name" value="RNA polymerase alpha subunit dimerisation domain"/>
    <property type="match status" value="1"/>
</dbReference>
<dbReference type="Gene3D" id="3.90.1110.10">
    <property type="entry name" value="RNA polymerase Rpb2, domain 2"/>
    <property type="match status" value="1"/>
</dbReference>
<dbReference type="HAMAP" id="MF_01321">
    <property type="entry name" value="RNApol_bact_RpoB"/>
    <property type="match status" value="1"/>
</dbReference>
<dbReference type="InterPro" id="IPR042107">
    <property type="entry name" value="DNA-dir_RNA_pol_bsu_ext_1_sf"/>
</dbReference>
<dbReference type="InterPro" id="IPR019462">
    <property type="entry name" value="DNA-dir_RNA_pol_bsu_external_1"/>
</dbReference>
<dbReference type="InterPro" id="IPR015712">
    <property type="entry name" value="DNA-dir_RNA_pol_su2"/>
</dbReference>
<dbReference type="InterPro" id="IPR007120">
    <property type="entry name" value="DNA-dir_RNAP_su2_dom"/>
</dbReference>
<dbReference type="InterPro" id="IPR037033">
    <property type="entry name" value="DNA-dir_RNAP_su2_hyb_sf"/>
</dbReference>
<dbReference type="InterPro" id="IPR010243">
    <property type="entry name" value="RNA_pol_bsu_bac"/>
</dbReference>
<dbReference type="InterPro" id="IPR007121">
    <property type="entry name" value="RNA_pol_bsu_CS"/>
</dbReference>
<dbReference type="InterPro" id="IPR007644">
    <property type="entry name" value="RNA_pol_bsu_protrusion"/>
</dbReference>
<dbReference type="InterPro" id="IPR007642">
    <property type="entry name" value="RNA_pol_Rpb2_2"/>
</dbReference>
<dbReference type="InterPro" id="IPR037034">
    <property type="entry name" value="RNA_pol_Rpb2_2_sf"/>
</dbReference>
<dbReference type="InterPro" id="IPR007645">
    <property type="entry name" value="RNA_pol_Rpb2_3"/>
</dbReference>
<dbReference type="InterPro" id="IPR007641">
    <property type="entry name" value="RNA_pol_Rpb2_7"/>
</dbReference>
<dbReference type="InterPro" id="IPR014724">
    <property type="entry name" value="RNA_pol_RPB2_OB-fold"/>
</dbReference>
<dbReference type="NCBIfam" id="NF001616">
    <property type="entry name" value="PRK00405.1"/>
    <property type="match status" value="1"/>
</dbReference>
<dbReference type="NCBIfam" id="TIGR02013">
    <property type="entry name" value="rpoB"/>
    <property type="match status" value="1"/>
</dbReference>
<dbReference type="PANTHER" id="PTHR20856">
    <property type="entry name" value="DNA-DIRECTED RNA POLYMERASE I SUBUNIT 2"/>
    <property type="match status" value="1"/>
</dbReference>
<dbReference type="Pfam" id="PF04563">
    <property type="entry name" value="RNA_pol_Rpb2_1"/>
    <property type="match status" value="1"/>
</dbReference>
<dbReference type="Pfam" id="PF04561">
    <property type="entry name" value="RNA_pol_Rpb2_2"/>
    <property type="match status" value="1"/>
</dbReference>
<dbReference type="Pfam" id="PF04565">
    <property type="entry name" value="RNA_pol_Rpb2_3"/>
    <property type="match status" value="1"/>
</dbReference>
<dbReference type="Pfam" id="PF10385">
    <property type="entry name" value="RNA_pol_Rpb2_45"/>
    <property type="match status" value="1"/>
</dbReference>
<dbReference type="Pfam" id="PF00562">
    <property type="entry name" value="RNA_pol_Rpb2_6"/>
    <property type="match status" value="1"/>
</dbReference>
<dbReference type="Pfam" id="PF04560">
    <property type="entry name" value="RNA_pol_Rpb2_7"/>
    <property type="match status" value="1"/>
</dbReference>
<dbReference type="SUPFAM" id="SSF64484">
    <property type="entry name" value="beta and beta-prime subunits of DNA dependent RNA-polymerase"/>
    <property type="match status" value="1"/>
</dbReference>
<dbReference type="PROSITE" id="PS01166">
    <property type="entry name" value="RNA_POL_BETA"/>
    <property type="match status" value="1"/>
</dbReference>
<comment type="function">
    <text evidence="1">DNA-dependent RNA polymerase catalyzes the transcription of DNA into RNA using the four ribonucleoside triphosphates as substrates.</text>
</comment>
<comment type="catalytic activity">
    <reaction evidence="1">
        <text>RNA(n) + a ribonucleoside 5'-triphosphate = RNA(n+1) + diphosphate</text>
        <dbReference type="Rhea" id="RHEA:21248"/>
        <dbReference type="Rhea" id="RHEA-COMP:14527"/>
        <dbReference type="Rhea" id="RHEA-COMP:17342"/>
        <dbReference type="ChEBI" id="CHEBI:33019"/>
        <dbReference type="ChEBI" id="CHEBI:61557"/>
        <dbReference type="ChEBI" id="CHEBI:140395"/>
        <dbReference type="EC" id="2.7.7.6"/>
    </reaction>
</comment>
<comment type="subunit">
    <text evidence="1">In plastids the minimal PEP RNA polymerase catalytic core is composed of four subunits: alpha, beta, beta', and beta''. When a (nuclear-encoded) sigma factor is associated with the core the holoenzyme is formed, which can initiate transcription.</text>
</comment>
<comment type="subcellular location">
    <subcellularLocation>
        <location>Plastid</location>
        <location>Chloroplast</location>
    </subcellularLocation>
</comment>
<comment type="similarity">
    <text evidence="1">Belongs to the RNA polymerase beta chain family.</text>
</comment>